<organism>
    <name type="scientific">Aliarcobacter butzleri (strain RM4018)</name>
    <name type="common">Arcobacter butzleri</name>
    <dbReference type="NCBI Taxonomy" id="367737"/>
    <lineage>
        <taxon>Bacteria</taxon>
        <taxon>Pseudomonadati</taxon>
        <taxon>Campylobacterota</taxon>
        <taxon>Epsilonproteobacteria</taxon>
        <taxon>Campylobacterales</taxon>
        <taxon>Arcobacteraceae</taxon>
        <taxon>Aliarcobacter</taxon>
    </lineage>
</organism>
<protein>
    <recommendedName>
        <fullName evidence="1">Pyridoxine 5'-phosphate synthase</fullName>
        <shortName evidence="1">PNP synthase</shortName>
        <ecNumber evidence="1">2.6.99.2</ecNumber>
    </recommendedName>
</protein>
<proteinExistence type="inferred from homology"/>
<gene>
    <name evidence="1" type="primary">pdxJ</name>
    <name type="ordered locus">Abu_0650</name>
</gene>
<feature type="chain" id="PRO_1000059229" description="Pyridoxine 5'-phosphate synthase">
    <location>
        <begin position="1"/>
        <end position="261"/>
    </location>
</feature>
<feature type="active site" description="Proton acceptor" evidence="1">
    <location>
        <position position="42"/>
    </location>
</feature>
<feature type="active site" description="Proton acceptor" evidence="1">
    <location>
        <position position="69"/>
    </location>
</feature>
<feature type="active site" description="Proton donor" evidence="1">
    <location>
        <position position="213"/>
    </location>
</feature>
<feature type="binding site" evidence="1">
    <location>
        <position position="6"/>
    </location>
    <ligand>
        <name>3-amino-2-oxopropyl phosphate</name>
        <dbReference type="ChEBI" id="CHEBI:57279"/>
    </ligand>
</feature>
<feature type="binding site" evidence="1">
    <location>
        <begin position="8"/>
        <end position="9"/>
    </location>
    <ligand>
        <name>1-deoxy-D-xylulose 5-phosphate</name>
        <dbReference type="ChEBI" id="CHEBI:57792"/>
    </ligand>
</feature>
<feature type="binding site" evidence="1">
    <location>
        <position position="17"/>
    </location>
    <ligand>
        <name>3-amino-2-oxopropyl phosphate</name>
        <dbReference type="ChEBI" id="CHEBI:57279"/>
    </ligand>
</feature>
<feature type="binding site" evidence="1">
    <location>
        <position position="44"/>
    </location>
    <ligand>
        <name>1-deoxy-D-xylulose 5-phosphate</name>
        <dbReference type="ChEBI" id="CHEBI:57792"/>
    </ligand>
</feature>
<feature type="binding site" evidence="1">
    <location>
        <position position="49"/>
    </location>
    <ligand>
        <name>1-deoxy-D-xylulose 5-phosphate</name>
        <dbReference type="ChEBI" id="CHEBI:57792"/>
    </ligand>
</feature>
<feature type="binding site" evidence="1">
    <location>
        <position position="99"/>
    </location>
    <ligand>
        <name>1-deoxy-D-xylulose 5-phosphate</name>
        <dbReference type="ChEBI" id="CHEBI:57792"/>
    </ligand>
</feature>
<feature type="binding site" evidence="1">
    <location>
        <position position="214"/>
    </location>
    <ligand>
        <name>3-amino-2-oxopropyl phosphate</name>
        <dbReference type="ChEBI" id="CHEBI:57279"/>
    </ligand>
</feature>
<feature type="binding site" evidence="1">
    <location>
        <begin position="235"/>
        <end position="236"/>
    </location>
    <ligand>
        <name>3-amino-2-oxopropyl phosphate</name>
        <dbReference type="ChEBI" id="CHEBI:57279"/>
    </ligand>
</feature>
<feature type="site" description="Transition state stabilizer" evidence="1">
    <location>
        <position position="150"/>
    </location>
</feature>
<reference key="1">
    <citation type="journal article" date="2007" name="PLoS ONE">
        <title>The complete genome sequence and analysis of the Epsilonproteobacterium Arcobacter butzleri.</title>
        <authorList>
            <person name="Miller W.G."/>
            <person name="Parker C.T."/>
            <person name="Rubenfield M."/>
            <person name="Mendz G.L."/>
            <person name="Woesten M.M.S.M."/>
            <person name="Ussery D.W."/>
            <person name="Stolz J.F."/>
            <person name="Binnewies T.T."/>
            <person name="Hallin P.F."/>
            <person name="Wang G."/>
            <person name="Malek J.A."/>
            <person name="Rogosin A."/>
            <person name="Stanker L.H."/>
            <person name="Mandrell R.E."/>
        </authorList>
    </citation>
    <scope>NUCLEOTIDE SEQUENCE [LARGE SCALE GENOMIC DNA]</scope>
    <source>
        <strain>RM4018</strain>
    </source>
</reference>
<evidence type="ECO:0000255" key="1">
    <source>
        <dbReference type="HAMAP-Rule" id="MF_00279"/>
    </source>
</evidence>
<name>PDXJ_ALIB4</name>
<sequence>MLLGVNIDHIAVLREARKINDPNPLDALSICKLSGAEQITIHLREDRRHIHDNDAKAIIEQSSLPVNLECSINSDIIDIVCKLKPSRATLVPENRNEVTTEGGLDIKGNFEKLQKVIDKLHANEIEVSLFIDPKDEIIELSKELEVEWIELHTGTFANIYAMLYSNLASTHHSIKELELSKSELKTKLSKSIKQIETSSKLAKKLGLKVAAGHGLNYQNVTLISKIPEIEELNIGQSIIARSVFTGLKQAIIDMKELIKND</sequence>
<keyword id="KW-0963">Cytoplasm</keyword>
<keyword id="KW-0664">Pyridoxine biosynthesis</keyword>
<keyword id="KW-1185">Reference proteome</keyword>
<keyword id="KW-0808">Transferase</keyword>
<comment type="function">
    <text evidence="1">Catalyzes the complicated ring closure reaction between the two acyclic compounds 1-deoxy-D-xylulose-5-phosphate (DXP) and 3-amino-2-oxopropyl phosphate (1-amino-acetone-3-phosphate or AAP) to form pyridoxine 5'-phosphate (PNP) and inorganic phosphate.</text>
</comment>
<comment type="catalytic activity">
    <reaction evidence="1">
        <text>3-amino-2-oxopropyl phosphate + 1-deoxy-D-xylulose 5-phosphate = pyridoxine 5'-phosphate + phosphate + 2 H2O + H(+)</text>
        <dbReference type="Rhea" id="RHEA:15265"/>
        <dbReference type="ChEBI" id="CHEBI:15377"/>
        <dbReference type="ChEBI" id="CHEBI:15378"/>
        <dbReference type="ChEBI" id="CHEBI:43474"/>
        <dbReference type="ChEBI" id="CHEBI:57279"/>
        <dbReference type="ChEBI" id="CHEBI:57792"/>
        <dbReference type="ChEBI" id="CHEBI:58589"/>
        <dbReference type="EC" id="2.6.99.2"/>
    </reaction>
</comment>
<comment type="pathway">
    <text evidence="1">Cofactor biosynthesis; pyridoxine 5'-phosphate biosynthesis; pyridoxine 5'-phosphate from D-erythrose 4-phosphate: step 5/5.</text>
</comment>
<comment type="subunit">
    <text evidence="1">Homooctamer; tetramer of dimers.</text>
</comment>
<comment type="subcellular location">
    <subcellularLocation>
        <location evidence="1">Cytoplasm</location>
    </subcellularLocation>
</comment>
<comment type="similarity">
    <text evidence="1">Belongs to the PNP synthase family.</text>
</comment>
<dbReference type="EC" id="2.6.99.2" evidence="1"/>
<dbReference type="EMBL" id="CP000361">
    <property type="protein sequence ID" value="ABV66915.1"/>
    <property type="molecule type" value="Genomic_DNA"/>
</dbReference>
<dbReference type="RefSeq" id="WP_004510707.1">
    <property type="nucleotide sequence ID" value="NC_009850.1"/>
</dbReference>
<dbReference type="SMR" id="A8ESJ1"/>
<dbReference type="STRING" id="367737.Abu_0650"/>
<dbReference type="GeneID" id="24304586"/>
<dbReference type="KEGG" id="abu:Abu_0650"/>
<dbReference type="eggNOG" id="COG0854">
    <property type="taxonomic scope" value="Bacteria"/>
</dbReference>
<dbReference type="HOGENOM" id="CLU_074563_0_0_7"/>
<dbReference type="UniPathway" id="UPA00244">
    <property type="reaction ID" value="UER00313"/>
</dbReference>
<dbReference type="Proteomes" id="UP000001136">
    <property type="component" value="Chromosome"/>
</dbReference>
<dbReference type="GO" id="GO:0005829">
    <property type="term" value="C:cytosol"/>
    <property type="evidence" value="ECO:0007669"/>
    <property type="project" value="TreeGrafter"/>
</dbReference>
<dbReference type="GO" id="GO:0033856">
    <property type="term" value="F:pyridoxine 5'-phosphate synthase activity"/>
    <property type="evidence" value="ECO:0007669"/>
    <property type="project" value="UniProtKB-EC"/>
</dbReference>
<dbReference type="GO" id="GO:0008615">
    <property type="term" value="P:pyridoxine biosynthetic process"/>
    <property type="evidence" value="ECO:0007669"/>
    <property type="project" value="UniProtKB-UniRule"/>
</dbReference>
<dbReference type="CDD" id="cd00003">
    <property type="entry name" value="PNPsynthase"/>
    <property type="match status" value="1"/>
</dbReference>
<dbReference type="Gene3D" id="3.20.20.70">
    <property type="entry name" value="Aldolase class I"/>
    <property type="match status" value="1"/>
</dbReference>
<dbReference type="HAMAP" id="MF_00279">
    <property type="entry name" value="PdxJ"/>
    <property type="match status" value="1"/>
</dbReference>
<dbReference type="InterPro" id="IPR013785">
    <property type="entry name" value="Aldolase_TIM"/>
</dbReference>
<dbReference type="InterPro" id="IPR004569">
    <property type="entry name" value="PyrdxlP_synth_PdxJ"/>
</dbReference>
<dbReference type="InterPro" id="IPR036130">
    <property type="entry name" value="Pyridoxine-5'_phos_synth"/>
</dbReference>
<dbReference type="NCBIfam" id="TIGR00559">
    <property type="entry name" value="pdxJ"/>
    <property type="match status" value="1"/>
</dbReference>
<dbReference type="NCBIfam" id="NF003625">
    <property type="entry name" value="PRK05265.1-3"/>
    <property type="match status" value="1"/>
</dbReference>
<dbReference type="NCBIfam" id="NF003627">
    <property type="entry name" value="PRK05265.1-5"/>
    <property type="match status" value="1"/>
</dbReference>
<dbReference type="PANTHER" id="PTHR30456">
    <property type="entry name" value="PYRIDOXINE 5'-PHOSPHATE SYNTHASE"/>
    <property type="match status" value="1"/>
</dbReference>
<dbReference type="PANTHER" id="PTHR30456:SF0">
    <property type="entry name" value="PYRIDOXINE 5'-PHOSPHATE SYNTHASE"/>
    <property type="match status" value="1"/>
</dbReference>
<dbReference type="Pfam" id="PF03740">
    <property type="entry name" value="PdxJ"/>
    <property type="match status" value="1"/>
</dbReference>
<dbReference type="SUPFAM" id="SSF63892">
    <property type="entry name" value="Pyridoxine 5'-phosphate synthase"/>
    <property type="match status" value="1"/>
</dbReference>
<accession>A8ESJ1</accession>